<protein>
    <recommendedName>
        <fullName evidence="1">Arabinose import ATP-binding protein AraG 2</fullName>
        <ecNumber evidence="1">7.5.2.12</ecNumber>
    </recommendedName>
</protein>
<proteinExistence type="inferred from homology"/>
<evidence type="ECO:0000255" key="1">
    <source>
        <dbReference type="HAMAP-Rule" id="MF_01721"/>
    </source>
</evidence>
<evidence type="ECO:0000256" key="2">
    <source>
        <dbReference type="SAM" id="MobiDB-lite"/>
    </source>
</evidence>
<dbReference type="EC" id="7.5.2.12" evidence="1"/>
<dbReference type="EMBL" id="CP000379">
    <property type="protein sequence ID" value="ABF80093.1"/>
    <property type="molecule type" value="Genomic_DNA"/>
</dbReference>
<dbReference type="SMR" id="Q1BJW2"/>
<dbReference type="HOGENOM" id="CLU_000604_92_3_4"/>
<dbReference type="GO" id="GO:0005886">
    <property type="term" value="C:plasma membrane"/>
    <property type="evidence" value="ECO:0007669"/>
    <property type="project" value="UniProtKB-SubCell"/>
</dbReference>
<dbReference type="GO" id="GO:0015612">
    <property type="term" value="F:ABC-type L-arabinose transporter activity"/>
    <property type="evidence" value="ECO:0007669"/>
    <property type="project" value="UniProtKB-EC"/>
</dbReference>
<dbReference type="GO" id="GO:0005524">
    <property type="term" value="F:ATP binding"/>
    <property type="evidence" value="ECO:0007669"/>
    <property type="project" value="UniProtKB-KW"/>
</dbReference>
<dbReference type="GO" id="GO:0016887">
    <property type="term" value="F:ATP hydrolysis activity"/>
    <property type="evidence" value="ECO:0007669"/>
    <property type="project" value="InterPro"/>
</dbReference>
<dbReference type="CDD" id="cd03216">
    <property type="entry name" value="ABC_Carb_Monos_I"/>
    <property type="match status" value="1"/>
</dbReference>
<dbReference type="CDD" id="cd03215">
    <property type="entry name" value="ABC_Carb_Monos_II"/>
    <property type="match status" value="1"/>
</dbReference>
<dbReference type="FunFam" id="3.40.50.300:FF:000126">
    <property type="entry name" value="Galactose/methyl galactoside import ATP-binding protein MglA"/>
    <property type="match status" value="1"/>
</dbReference>
<dbReference type="FunFam" id="3.40.50.300:FF:000127">
    <property type="entry name" value="Ribose import ATP-binding protein RbsA"/>
    <property type="match status" value="1"/>
</dbReference>
<dbReference type="Gene3D" id="3.40.50.300">
    <property type="entry name" value="P-loop containing nucleotide triphosphate hydrolases"/>
    <property type="match status" value="2"/>
</dbReference>
<dbReference type="InterPro" id="IPR003593">
    <property type="entry name" value="AAA+_ATPase"/>
</dbReference>
<dbReference type="InterPro" id="IPR050107">
    <property type="entry name" value="ABC_carbohydrate_import_ATPase"/>
</dbReference>
<dbReference type="InterPro" id="IPR003439">
    <property type="entry name" value="ABC_transporter-like_ATP-bd"/>
</dbReference>
<dbReference type="InterPro" id="IPR017871">
    <property type="entry name" value="ABC_transporter-like_CS"/>
</dbReference>
<dbReference type="InterPro" id="IPR027417">
    <property type="entry name" value="P-loop_NTPase"/>
</dbReference>
<dbReference type="NCBIfam" id="NF008442">
    <property type="entry name" value="PRK11288.1"/>
    <property type="match status" value="1"/>
</dbReference>
<dbReference type="PANTHER" id="PTHR43790:SF6">
    <property type="entry name" value="ARABINOSE IMPORT ATP-BINDING PROTEIN ARAG"/>
    <property type="match status" value="1"/>
</dbReference>
<dbReference type="PANTHER" id="PTHR43790">
    <property type="entry name" value="CARBOHYDRATE TRANSPORT ATP-BINDING PROTEIN MG119-RELATED"/>
    <property type="match status" value="1"/>
</dbReference>
<dbReference type="Pfam" id="PF00005">
    <property type="entry name" value="ABC_tran"/>
    <property type="match status" value="2"/>
</dbReference>
<dbReference type="SMART" id="SM00382">
    <property type="entry name" value="AAA"/>
    <property type="match status" value="2"/>
</dbReference>
<dbReference type="SUPFAM" id="SSF52540">
    <property type="entry name" value="P-loop containing nucleoside triphosphate hydrolases"/>
    <property type="match status" value="2"/>
</dbReference>
<dbReference type="PROSITE" id="PS00211">
    <property type="entry name" value="ABC_TRANSPORTER_1"/>
    <property type="match status" value="1"/>
</dbReference>
<dbReference type="PROSITE" id="PS50893">
    <property type="entry name" value="ABC_TRANSPORTER_2"/>
    <property type="match status" value="2"/>
</dbReference>
<dbReference type="PROSITE" id="PS51268">
    <property type="entry name" value="ARAG"/>
    <property type="match status" value="1"/>
</dbReference>
<gene>
    <name evidence="1" type="primary">araG2</name>
    <name type="ordered locus">Bcen_5219</name>
</gene>
<comment type="function">
    <text evidence="1">Part of the ABC transporter complex AraFGH involved in arabinose import. Responsible for energy coupling to the transport system.</text>
</comment>
<comment type="catalytic activity">
    <reaction evidence="1">
        <text>L-arabinose(out) + ATP + H2O = L-arabinose(in) + ADP + phosphate + H(+)</text>
        <dbReference type="Rhea" id="RHEA:30007"/>
        <dbReference type="ChEBI" id="CHEBI:15377"/>
        <dbReference type="ChEBI" id="CHEBI:15378"/>
        <dbReference type="ChEBI" id="CHEBI:17535"/>
        <dbReference type="ChEBI" id="CHEBI:30616"/>
        <dbReference type="ChEBI" id="CHEBI:43474"/>
        <dbReference type="ChEBI" id="CHEBI:456216"/>
        <dbReference type="EC" id="7.5.2.12"/>
    </reaction>
</comment>
<comment type="subunit">
    <text evidence="1">The complex is composed of two ATP-binding proteins (AraG), two transmembrane proteins (AraH) and a solute-binding protein (AraF).</text>
</comment>
<comment type="subcellular location">
    <subcellularLocation>
        <location evidence="1">Cell inner membrane</location>
        <topology evidence="1">Peripheral membrane protein</topology>
    </subcellularLocation>
</comment>
<comment type="similarity">
    <text evidence="1">Belongs to the ABC transporter superfamily. Arabinose importer (TC 3.A.1.2.2) family.</text>
</comment>
<organism>
    <name type="scientific">Burkholderia orbicola (strain AU 1054)</name>
    <dbReference type="NCBI Taxonomy" id="331271"/>
    <lineage>
        <taxon>Bacteria</taxon>
        <taxon>Pseudomonadati</taxon>
        <taxon>Pseudomonadota</taxon>
        <taxon>Betaproteobacteria</taxon>
        <taxon>Burkholderiales</taxon>
        <taxon>Burkholderiaceae</taxon>
        <taxon>Burkholderia</taxon>
        <taxon>Burkholderia cepacia complex</taxon>
        <taxon>Burkholderia orbicola</taxon>
    </lineage>
</organism>
<sequence length="515" mass="55558">MTMQTMTAASGHDAEAGTPPDGPLLALDGITVTFPGVRALDAVSLSVRAGEVHGLMGENGAGKSTLLKVLSGVNQPQAGTLTLNGTAQRFASTRAALEAGIAIIYQELHLVPELTVAENLMLGQLPSRLGVVDERTLAARALDALERLGEHIDPGIPVKYLSIGQRQMIEIGKALMRHARVIAFDEPTSSLSARETTQLFRIIRALRAEGRAIIYVTHRMEEVYELCDRVTVFRDGRRIDTFDSVADLDRDRLIGCMVGRSIEDVYGYRSRPAGDVLIEAKGLAGPGLAEPVSFTARRGEIVGFFGLVGAGRSELMKLLYGAVRPSAGHVELNGKRVAFGSPRDAVRAGIALCPEDRKQEGIVAIASVADNLNISARRHFSPARVLLDGRRERELAQKYIERLAIKTRDGDTPIGALSGGNQQKVVLARWLAERIDVFLMDEPTRGIDVGARAEIYNLFYELAEAGRTVILVSSDLAEVIGVSDRIVVMKEGRIAGEVAKAHATPDALIKLALPR</sequence>
<accession>Q1BJW2</accession>
<name>ARAG2_BURO1</name>
<feature type="chain" id="PRO_0000270456" description="Arabinose import ATP-binding protein AraG 2">
    <location>
        <begin position="1"/>
        <end position="515"/>
    </location>
</feature>
<feature type="domain" description="ABC transporter 1" evidence="1">
    <location>
        <begin position="25"/>
        <end position="260"/>
    </location>
</feature>
<feature type="domain" description="ABC transporter 2" evidence="1">
    <location>
        <begin position="260"/>
        <end position="511"/>
    </location>
</feature>
<feature type="region of interest" description="Disordered" evidence="2">
    <location>
        <begin position="1"/>
        <end position="22"/>
    </location>
</feature>
<feature type="binding site" evidence="1">
    <location>
        <begin position="57"/>
        <end position="64"/>
    </location>
    <ligand>
        <name>ATP</name>
        <dbReference type="ChEBI" id="CHEBI:30616"/>
    </ligand>
</feature>
<reference key="1">
    <citation type="submission" date="2006-05" db="EMBL/GenBank/DDBJ databases">
        <title>Complete sequence of chromosome 2 of Burkholderia cenocepacia AU 1054.</title>
        <authorList>
            <consortium name="US DOE Joint Genome Institute"/>
            <person name="Copeland A."/>
            <person name="Lucas S."/>
            <person name="Lapidus A."/>
            <person name="Barry K."/>
            <person name="Detter J.C."/>
            <person name="Glavina del Rio T."/>
            <person name="Hammon N."/>
            <person name="Israni S."/>
            <person name="Dalin E."/>
            <person name="Tice H."/>
            <person name="Pitluck S."/>
            <person name="Chain P."/>
            <person name="Malfatti S."/>
            <person name="Shin M."/>
            <person name="Vergez L."/>
            <person name="Schmutz J."/>
            <person name="Larimer F."/>
            <person name="Land M."/>
            <person name="Hauser L."/>
            <person name="Kyrpides N."/>
            <person name="Lykidis A."/>
            <person name="LiPuma J.J."/>
            <person name="Konstantinidis K."/>
            <person name="Tiedje J.M."/>
            <person name="Richardson P."/>
        </authorList>
    </citation>
    <scope>NUCLEOTIDE SEQUENCE [LARGE SCALE GENOMIC DNA]</scope>
    <source>
        <strain>AU 1054</strain>
    </source>
</reference>
<keyword id="KW-0067">ATP-binding</keyword>
<keyword id="KW-0997">Cell inner membrane</keyword>
<keyword id="KW-1003">Cell membrane</keyword>
<keyword id="KW-0472">Membrane</keyword>
<keyword id="KW-0547">Nucleotide-binding</keyword>
<keyword id="KW-0677">Repeat</keyword>
<keyword id="KW-0762">Sugar transport</keyword>
<keyword id="KW-1278">Translocase</keyword>
<keyword id="KW-0813">Transport</keyword>